<comment type="function">
    <text evidence="1">Catalyzes the transfer of pyrophosphate from adenosine triphosphate (ATP) to 6-hydroxymethyl-7,8-dihydropterin, an enzymatic step in folate biosynthesis pathway.</text>
</comment>
<comment type="catalytic activity">
    <reaction evidence="1">
        <text>6-hydroxymethyl-7,8-dihydropterin + ATP = (7,8-dihydropterin-6-yl)methyl diphosphate + AMP + H(+)</text>
        <dbReference type="Rhea" id="RHEA:11412"/>
        <dbReference type="ChEBI" id="CHEBI:15378"/>
        <dbReference type="ChEBI" id="CHEBI:30616"/>
        <dbReference type="ChEBI" id="CHEBI:44841"/>
        <dbReference type="ChEBI" id="CHEBI:72950"/>
        <dbReference type="ChEBI" id="CHEBI:456215"/>
        <dbReference type="EC" id="2.7.6.3"/>
    </reaction>
</comment>
<comment type="pathway">
    <text evidence="1">Cofactor biosynthesis; tetrahydrofolate biosynthesis; 2-amino-4-hydroxy-6-hydroxymethyl-7,8-dihydropteridine diphosphate from 7,8-dihydroneopterin triphosphate: step 4/4.</text>
</comment>
<comment type="similarity">
    <text evidence="2">Belongs to the HPPK family.</text>
</comment>
<dbReference type="EC" id="2.7.6.3" evidence="1"/>
<dbReference type="EMBL" id="D26185">
    <property type="protein sequence ID" value="BAA05314.1"/>
    <property type="molecule type" value="Genomic_DNA"/>
</dbReference>
<dbReference type="EMBL" id="AL009126">
    <property type="protein sequence ID" value="CAB11855.1"/>
    <property type="molecule type" value="Genomic_DNA"/>
</dbReference>
<dbReference type="EMBL" id="M34053">
    <property type="status" value="NOT_ANNOTATED_CDS"/>
    <property type="molecule type" value="Genomic_DNA"/>
</dbReference>
<dbReference type="PIR" id="S66109">
    <property type="entry name" value="S66109"/>
</dbReference>
<dbReference type="RefSeq" id="NP_387960.1">
    <property type="nucleotide sequence ID" value="NC_000964.3"/>
</dbReference>
<dbReference type="RefSeq" id="WP_003242690.1">
    <property type="nucleotide sequence ID" value="NZ_OZ025638.1"/>
</dbReference>
<dbReference type="SMR" id="P29252"/>
<dbReference type="FunCoup" id="P29252">
    <property type="interactions" value="546"/>
</dbReference>
<dbReference type="STRING" id="224308.BSU00790"/>
<dbReference type="PaxDb" id="224308-BSU00790"/>
<dbReference type="EnsemblBacteria" id="CAB11855">
    <property type="protein sequence ID" value="CAB11855"/>
    <property type="gene ID" value="BSU_00790"/>
</dbReference>
<dbReference type="GeneID" id="936940"/>
<dbReference type="KEGG" id="bsu:BSU00790"/>
<dbReference type="PATRIC" id="fig|224308.179.peg.79"/>
<dbReference type="eggNOG" id="COG0801">
    <property type="taxonomic scope" value="Bacteria"/>
</dbReference>
<dbReference type="InParanoid" id="P29252"/>
<dbReference type="OrthoDB" id="9808041at2"/>
<dbReference type="PhylomeDB" id="P29252"/>
<dbReference type="BioCyc" id="BSUB:BSU00790-MONOMER"/>
<dbReference type="UniPathway" id="UPA00077">
    <property type="reaction ID" value="UER00155"/>
</dbReference>
<dbReference type="Proteomes" id="UP000001570">
    <property type="component" value="Chromosome"/>
</dbReference>
<dbReference type="GO" id="GO:0003848">
    <property type="term" value="F:2-amino-4-hydroxy-6-hydroxymethyldihydropteridine diphosphokinase activity"/>
    <property type="evidence" value="ECO:0007669"/>
    <property type="project" value="UniProtKB-EC"/>
</dbReference>
<dbReference type="GO" id="GO:0005524">
    <property type="term" value="F:ATP binding"/>
    <property type="evidence" value="ECO:0007669"/>
    <property type="project" value="UniProtKB-KW"/>
</dbReference>
<dbReference type="GO" id="GO:0016301">
    <property type="term" value="F:kinase activity"/>
    <property type="evidence" value="ECO:0007669"/>
    <property type="project" value="UniProtKB-KW"/>
</dbReference>
<dbReference type="GO" id="GO:0046656">
    <property type="term" value="P:folic acid biosynthetic process"/>
    <property type="evidence" value="ECO:0007669"/>
    <property type="project" value="UniProtKB-KW"/>
</dbReference>
<dbReference type="GO" id="GO:0046654">
    <property type="term" value="P:tetrahydrofolate biosynthetic process"/>
    <property type="evidence" value="ECO:0007669"/>
    <property type="project" value="UniProtKB-UniPathway"/>
</dbReference>
<dbReference type="CDD" id="cd00483">
    <property type="entry name" value="HPPK"/>
    <property type="match status" value="1"/>
</dbReference>
<dbReference type="Gene3D" id="3.30.70.560">
    <property type="entry name" value="7,8-Dihydro-6-hydroxymethylpterin-pyrophosphokinase HPPK"/>
    <property type="match status" value="1"/>
</dbReference>
<dbReference type="InterPro" id="IPR000550">
    <property type="entry name" value="Hppk"/>
</dbReference>
<dbReference type="InterPro" id="IPR035907">
    <property type="entry name" value="Hppk_sf"/>
</dbReference>
<dbReference type="NCBIfam" id="TIGR01498">
    <property type="entry name" value="folK"/>
    <property type="match status" value="1"/>
</dbReference>
<dbReference type="PANTHER" id="PTHR43071">
    <property type="entry name" value="2-AMINO-4-HYDROXY-6-HYDROXYMETHYLDIHYDROPTERIDINE PYROPHOSPHOKINASE"/>
    <property type="match status" value="1"/>
</dbReference>
<dbReference type="PANTHER" id="PTHR43071:SF1">
    <property type="entry name" value="2-AMINO-4-HYDROXY-6-HYDROXYMETHYLDIHYDROPTERIDINE PYROPHOSPHOKINASE"/>
    <property type="match status" value="1"/>
</dbReference>
<dbReference type="Pfam" id="PF01288">
    <property type="entry name" value="HPPK"/>
    <property type="match status" value="1"/>
</dbReference>
<dbReference type="SUPFAM" id="SSF55083">
    <property type="entry name" value="6-hydroxymethyl-7,8-dihydropterin pyrophosphokinase, HPPK"/>
    <property type="match status" value="1"/>
</dbReference>
<dbReference type="PROSITE" id="PS00794">
    <property type="entry name" value="HPPK"/>
    <property type="match status" value="1"/>
</dbReference>
<evidence type="ECO:0000250" key="1">
    <source>
        <dbReference type="UniProtKB" id="P26281"/>
    </source>
</evidence>
<evidence type="ECO:0000305" key="2"/>
<reference key="1">
    <citation type="journal article" date="1994" name="DNA Res.">
        <title>Systematic sequencing of the 180 kilobase region of the Bacillus subtilis chromosome containing the replication origin.</title>
        <authorList>
            <person name="Ogasawara N."/>
            <person name="Nakai S."/>
            <person name="Yoshikawa H."/>
        </authorList>
    </citation>
    <scope>NUCLEOTIDE SEQUENCE [GENOMIC DNA]</scope>
    <source>
        <strain>168</strain>
    </source>
</reference>
<reference key="2">
    <citation type="journal article" date="1997" name="Nature">
        <title>The complete genome sequence of the Gram-positive bacterium Bacillus subtilis.</title>
        <authorList>
            <person name="Kunst F."/>
            <person name="Ogasawara N."/>
            <person name="Moszer I."/>
            <person name="Albertini A.M."/>
            <person name="Alloni G."/>
            <person name="Azevedo V."/>
            <person name="Bertero M.G."/>
            <person name="Bessieres P."/>
            <person name="Bolotin A."/>
            <person name="Borchert S."/>
            <person name="Borriss R."/>
            <person name="Boursier L."/>
            <person name="Brans A."/>
            <person name="Braun M."/>
            <person name="Brignell S.C."/>
            <person name="Bron S."/>
            <person name="Brouillet S."/>
            <person name="Bruschi C.V."/>
            <person name="Caldwell B."/>
            <person name="Capuano V."/>
            <person name="Carter N.M."/>
            <person name="Choi S.-K."/>
            <person name="Codani J.-J."/>
            <person name="Connerton I.F."/>
            <person name="Cummings N.J."/>
            <person name="Daniel R.A."/>
            <person name="Denizot F."/>
            <person name="Devine K.M."/>
            <person name="Duesterhoeft A."/>
            <person name="Ehrlich S.D."/>
            <person name="Emmerson P.T."/>
            <person name="Entian K.-D."/>
            <person name="Errington J."/>
            <person name="Fabret C."/>
            <person name="Ferrari E."/>
            <person name="Foulger D."/>
            <person name="Fritz C."/>
            <person name="Fujita M."/>
            <person name="Fujita Y."/>
            <person name="Fuma S."/>
            <person name="Galizzi A."/>
            <person name="Galleron N."/>
            <person name="Ghim S.-Y."/>
            <person name="Glaser P."/>
            <person name="Goffeau A."/>
            <person name="Golightly E.J."/>
            <person name="Grandi G."/>
            <person name="Guiseppi G."/>
            <person name="Guy B.J."/>
            <person name="Haga K."/>
            <person name="Haiech J."/>
            <person name="Harwood C.R."/>
            <person name="Henaut A."/>
            <person name="Hilbert H."/>
            <person name="Holsappel S."/>
            <person name="Hosono S."/>
            <person name="Hullo M.-F."/>
            <person name="Itaya M."/>
            <person name="Jones L.-M."/>
            <person name="Joris B."/>
            <person name="Karamata D."/>
            <person name="Kasahara Y."/>
            <person name="Klaerr-Blanchard M."/>
            <person name="Klein C."/>
            <person name="Kobayashi Y."/>
            <person name="Koetter P."/>
            <person name="Koningstein G."/>
            <person name="Krogh S."/>
            <person name="Kumano M."/>
            <person name="Kurita K."/>
            <person name="Lapidus A."/>
            <person name="Lardinois S."/>
            <person name="Lauber J."/>
            <person name="Lazarevic V."/>
            <person name="Lee S.-M."/>
            <person name="Levine A."/>
            <person name="Liu H."/>
            <person name="Masuda S."/>
            <person name="Mauel C."/>
            <person name="Medigue C."/>
            <person name="Medina N."/>
            <person name="Mellado R.P."/>
            <person name="Mizuno M."/>
            <person name="Moestl D."/>
            <person name="Nakai S."/>
            <person name="Noback M."/>
            <person name="Noone D."/>
            <person name="O'Reilly M."/>
            <person name="Ogawa K."/>
            <person name="Ogiwara A."/>
            <person name="Oudega B."/>
            <person name="Park S.-H."/>
            <person name="Parro V."/>
            <person name="Pohl T.M."/>
            <person name="Portetelle D."/>
            <person name="Porwollik S."/>
            <person name="Prescott A.M."/>
            <person name="Presecan E."/>
            <person name="Pujic P."/>
            <person name="Purnelle B."/>
            <person name="Rapoport G."/>
            <person name="Rey M."/>
            <person name="Reynolds S."/>
            <person name="Rieger M."/>
            <person name="Rivolta C."/>
            <person name="Rocha E."/>
            <person name="Roche B."/>
            <person name="Rose M."/>
            <person name="Sadaie Y."/>
            <person name="Sato T."/>
            <person name="Scanlan E."/>
            <person name="Schleich S."/>
            <person name="Schroeter R."/>
            <person name="Scoffone F."/>
            <person name="Sekiguchi J."/>
            <person name="Sekowska A."/>
            <person name="Seror S.J."/>
            <person name="Serror P."/>
            <person name="Shin B.-S."/>
            <person name="Soldo B."/>
            <person name="Sorokin A."/>
            <person name="Tacconi E."/>
            <person name="Takagi T."/>
            <person name="Takahashi H."/>
            <person name="Takemaru K."/>
            <person name="Takeuchi M."/>
            <person name="Tamakoshi A."/>
            <person name="Tanaka T."/>
            <person name="Terpstra P."/>
            <person name="Tognoni A."/>
            <person name="Tosato V."/>
            <person name="Uchiyama S."/>
            <person name="Vandenbol M."/>
            <person name="Vannier F."/>
            <person name="Vassarotti A."/>
            <person name="Viari A."/>
            <person name="Wambutt R."/>
            <person name="Wedler E."/>
            <person name="Wedler H."/>
            <person name="Weitzenegger T."/>
            <person name="Winters P."/>
            <person name="Wipat A."/>
            <person name="Yamamoto H."/>
            <person name="Yamane K."/>
            <person name="Yasumoto K."/>
            <person name="Yata K."/>
            <person name="Yoshida K."/>
            <person name="Yoshikawa H.-F."/>
            <person name="Zumstein E."/>
            <person name="Yoshikawa H."/>
            <person name="Danchin A."/>
        </authorList>
    </citation>
    <scope>NUCLEOTIDE SEQUENCE [LARGE SCALE GENOMIC DNA]</scope>
    <source>
        <strain>168</strain>
    </source>
</reference>
<reference key="3">
    <citation type="journal article" date="1990" name="J. Bacteriol.">
        <title>An apparent Bacillus subtilis folic acid biosynthetic operon containing pab, an amphibolic trpG gene, a third gene required for synthesis of para-aminobenzoic acid, and the dihydropteroate synthase gene.</title>
        <authorList>
            <person name="Slock J."/>
            <person name="Stahly D.P."/>
            <person name="Han C.-Y."/>
            <person name="Six E.W."/>
            <person name="Crawford I.P."/>
        </authorList>
    </citation>
    <scope>NUCLEOTIDE SEQUENCE [GENOMIC DNA] OF 1-162</scope>
    <source>
        <strain>ASB342</strain>
    </source>
</reference>
<proteinExistence type="inferred from homology"/>
<keyword id="KW-0067">ATP-binding</keyword>
<keyword id="KW-0289">Folate biosynthesis</keyword>
<keyword id="KW-0418">Kinase</keyword>
<keyword id="KW-0547">Nucleotide-binding</keyword>
<keyword id="KW-1185">Reference proteome</keyword>
<keyword id="KW-0808">Transferase</keyword>
<gene>
    <name type="primary">folK</name>
    <name type="ordered locus">BSU00790</name>
</gene>
<feature type="chain" id="PRO_0000168247" description="2-amino-4-hydroxy-6-hydroxymethyldihydropteridine pyrophosphokinase">
    <location>
        <begin position="1"/>
        <end position="167"/>
    </location>
</feature>
<name>HPPK_BACSU</name>
<accession>P29252</accession>
<sequence>MNNIAYIALGSNIGDRETYLRQAVALLHQHAAVTVTKVSSIYETDPVGYEDQAQFLNMAVEIKTSLNPFELLELTQQIENELGRTREVRWGPRTADLDILLFNRENIETEQLIVPHPRMYERLFVLAPLAEICQQVEKEATSAETDQEGVRVWKQKSGVDEFVHSES</sequence>
<protein>
    <recommendedName>
        <fullName evidence="1">2-amino-4-hydroxy-6-hydroxymethyldihydropteridine pyrophosphokinase</fullName>
        <ecNumber evidence="1">2.7.6.3</ecNumber>
    </recommendedName>
    <alternativeName>
        <fullName evidence="1">6-hydroxymethyl-7,8-dihydropterin pyrophosphokinase</fullName>
        <shortName evidence="1">PPPK</shortName>
    </alternativeName>
    <alternativeName>
        <fullName evidence="1">7,8-dihydro-6-hydroxymethylpterin-pyrophosphokinase</fullName>
        <shortName evidence="1">HPPK</shortName>
    </alternativeName>
</protein>
<organism>
    <name type="scientific">Bacillus subtilis (strain 168)</name>
    <dbReference type="NCBI Taxonomy" id="224308"/>
    <lineage>
        <taxon>Bacteria</taxon>
        <taxon>Bacillati</taxon>
        <taxon>Bacillota</taxon>
        <taxon>Bacilli</taxon>
        <taxon>Bacillales</taxon>
        <taxon>Bacillaceae</taxon>
        <taxon>Bacillus</taxon>
    </lineage>
</organism>